<proteinExistence type="inferred from homology"/>
<sequence>MLNEFRTFINRGNVLDLAVGVIIGAAFTAIINSLVNDIINPLLGLLVGGRTDMSNYFLPLAGQTATTLAEARAAGPVLAYGSFLNAVINFLLVAFVIFLIVRTANRFNPKPAEPPALPQPTPSERLLAEIRDLLAQR</sequence>
<reference key="1">
    <citation type="submission" date="2008-12" db="EMBL/GenBank/DDBJ databases">
        <title>Complete sequence of Chloroflexus aggregans DSM 9485.</title>
        <authorList>
            <consortium name="US DOE Joint Genome Institute"/>
            <person name="Lucas S."/>
            <person name="Copeland A."/>
            <person name="Lapidus A."/>
            <person name="Glavina del Rio T."/>
            <person name="Dalin E."/>
            <person name="Tice H."/>
            <person name="Pitluck S."/>
            <person name="Foster B."/>
            <person name="Larimer F."/>
            <person name="Land M."/>
            <person name="Hauser L."/>
            <person name="Kyrpides N."/>
            <person name="Mikhailova N."/>
            <person name="Bryant D.A."/>
            <person name="Richardson P."/>
        </authorList>
    </citation>
    <scope>NUCLEOTIDE SEQUENCE [LARGE SCALE GENOMIC DNA]</scope>
    <source>
        <strain>MD-66 / DSM 9485</strain>
    </source>
</reference>
<keyword id="KW-1003">Cell membrane</keyword>
<keyword id="KW-0407">Ion channel</keyword>
<keyword id="KW-0406">Ion transport</keyword>
<keyword id="KW-0472">Membrane</keyword>
<keyword id="KW-0812">Transmembrane</keyword>
<keyword id="KW-1133">Transmembrane helix</keyword>
<keyword id="KW-0813">Transport</keyword>
<comment type="function">
    <text evidence="1">Channel that opens in response to stretch forces in the membrane lipid bilayer. May participate in the regulation of osmotic pressure changes within the cell.</text>
</comment>
<comment type="subunit">
    <text evidence="1">Homopentamer.</text>
</comment>
<comment type="subcellular location">
    <subcellularLocation>
        <location evidence="1">Cell membrane</location>
        <topology evidence="1">Multi-pass membrane protein</topology>
    </subcellularLocation>
</comment>
<comment type="similarity">
    <text evidence="1">Belongs to the MscL family.</text>
</comment>
<accession>B8G6C2</accession>
<dbReference type="EMBL" id="CP001337">
    <property type="protein sequence ID" value="ACL23859.1"/>
    <property type="molecule type" value="Genomic_DNA"/>
</dbReference>
<dbReference type="RefSeq" id="WP_012616225.1">
    <property type="nucleotide sequence ID" value="NC_011831.1"/>
</dbReference>
<dbReference type="SMR" id="B8G6C2"/>
<dbReference type="STRING" id="326427.Cagg_0941"/>
<dbReference type="KEGG" id="cag:Cagg_0941"/>
<dbReference type="eggNOG" id="COG1970">
    <property type="taxonomic scope" value="Bacteria"/>
</dbReference>
<dbReference type="HOGENOM" id="CLU_095787_0_1_0"/>
<dbReference type="OrthoDB" id="9810350at2"/>
<dbReference type="Proteomes" id="UP000002508">
    <property type="component" value="Chromosome"/>
</dbReference>
<dbReference type="GO" id="GO:0005886">
    <property type="term" value="C:plasma membrane"/>
    <property type="evidence" value="ECO:0007669"/>
    <property type="project" value="UniProtKB-SubCell"/>
</dbReference>
<dbReference type="GO" id="GO:0008381">
    <property type="term" value="F:mechanosensitive monoatomic ion channel activity"/>
    <property type="evidence" value="ECO:0007669"/>
    <property type="project" value="UniProtKB-UniRule"/>
</dbReference>
<dbReference type="Gene3D" id="1.10.1200.120">
    <property type="entry name" value="Large-conductance mechanosensitive channel, MscL, domain 1"/>
    <property type="match status" value="1"/>
</dbReference>
<dbReference type="HAMAP" id="MF_00115">
    <property type="entry name" value="MscL"/>
    <property type="match status" value="1"/>
</dbReference>
<dbReference type="InterPro" id="IPR019823">
    <property type="entry name" value="Mechanosensitive_channel_CS"/>
</dbReference>
<dbReference type="InterPro" id="IPR001185">
    <property type="entry name" value="MS_channel"/>
</dbReference>
<dbReference type="InterPro" id="IPR037673">
    <property type="entry name" value="MSC/AndL"/>
</dbReference>
<dbReference type="InterPro" id="IPR036019">
    <property type="entry name" value="MscL_channel"/>
</dbReference>
<dbReference type="NCBIfam" id="TIGR00220">
    <property type="entry name" value="mscL"/>
    <property type="match status" value="1"/>
</dbReference>
<dbReference type="NCBIfam" id="NF010557">
    <property type="entry name" value="PRK13952.1"/>
    <property type="match status" value="1"/>
</dbReference>
<dbReference type="PANTHER" id="PTHR30266:SF2">
    <property type="entry name" value="LARGE-CONDUCTANCE MECHANOSENSITIVE CHANNEL"/>
    <property type="match status" value="1"/>
</dbReference>
<dbReference type="PANTHER" id="PTHR30266">
    <property type="entry name" value="MECHANOSENSITIVE CHANNEL MSCL"/>
    <property type="match status" value="1"/>
</dbReference>
<dbReference type="Pfam" id="PF01741">
    <property type="entry name" value="MscL"/>
    <property type="match status" value="1"/>
</dbReference>
<dbReference type="PRINTS" id="PR01264">
    <property type="entry name" value="MECHCHANNEL"/>
</dbReference>
<dbReference type="SUPFAM" id="SSF81330">
    <property type="entry name" value="Gated mechanosensitive channel"/>
    <property type="match status" value="1"/>
</dbReference>
<dbReference type="PROSITE" id="PS01327">
    <property type="entry name" value="MSCL"/>
    <property type="match status" value="1"/>
</dbReference>
<feature type="chain" id="PRO_1000191359" description="Large-conductance mechanosensitive channel">
    <location>
        <begin position="1"/>
        <end position="137"/>
    </location>
</feature>
<feature type="transmembrane region" description="Helical" evidence="1">
    <location>
        <begin position="14"/>
        <end position="34"/>
    </location>
</feature>
<feature type="transmembrane region" description="Helical" evidence="1">
    <location>
        <begin position="81"/>
        <end position="101"/>
    </location>
</feature>
<gene>
    <name evidence="1" type="primary">mscL</name>
    <name type="ordered locus">Cagg_0941</name>
</gene>
<organism>
    <name type="scientific">Chloroflexus aggregans (strain MD-66 / DSM 9485)</name>
    <dbReference type="NCBI Taxonomy" id="326427"/>
    <lineage>
        <taxon>Bacteria</taxon>
        <taxon>Bacillati</taxon>
        <taxon>Chloroflexota</taxon>
        <taxon>Chloroflexia</taxon>
        <taxon>Chloroflexales</taxon>
        <taxon>Chloroflexineae</taxon>
        <taxon>Chloroflexaceae</taxon>
        <taxon>Chloroflexus</taxon>
    </lineage>
</organism>
<evidence type="ECO:0000255" key="1">
    <source>
        <dbReference type="HAMAP-Rule" id="MF_00115"/>
    </source>
</evidence>
<name>MSCL_CHLAD</name>
<protein>
    <recommendedName>
        <fullName evidence="1">Large-conductance mechanosensitive channel</fullName>
    </recommendedName>
</protein>